<sequence>MALTKAEMAERLFDEVGLNKREAKEFVDAFFDVLRDALEQGRQVKLSGFGNFDLRRKNQRPGRNPKTGEEIPISARTVVTFRPGQKLKERVEAYAGSGQ</sequence>
<feature type="chain" id="PRO_0000277789" description="Integration host factor subunit alpha">
    <location>
        <begin position="1"/>
        <end position="99"/>
    </location>
</feature>
<reference key="1">
    <citation type="journal article" date="2005" name="J. Bacteriol.">
        <title>Insights into genome plasticity and pathogenicity of the plant pathogenic Bacterium Xanthomonas campestris pv. vesicatoria revealed by the complete genome sequence.</title>
        <authorList>
            <person name="Thieme F."/>
            <person name="Koebnik R."/>
            <person name="Bekel T."/>
            <person name="Berger C."/>
            <person name="Boch J."/>
            <person name="Buettner D."/>
            <person name="Caldana C."/>
            <person name="Gaigalat L."/>
            <person name="Goesmann A."/>
            <person name="Kay S."/>
            <person name="Kirchner O."/>
            <person name="Lanz C."/>
            <person name="Linke B."/>
            <person name="McHardy A.C."/>
            <person name="Meyer F."/>
            <person name="Mittenhuber G."/>
            <person name="Nies D.H."/>
            <person name="Niesbach-Kloesgen U."/>
            <person name="Patschkowski T."/>
            <person name="Rueckert C."/>
            <person name="Rupp O."/>
            <person name="Schneiker S."/>
            <person name="Schuster S.C."/>
            <person name="Vorhoelter F.J."/>
            <person name="Weber E."/>
            <person name="Puehler A."/>
            <person name="Bonas U."/>
            <person name="Bartels D."/>
            <person name="Kaiser O."/>
        </authorList>
    </citation>
    <scope>NUCLEOTIDE SEQUENCE [LARGE SCALE GENOMIC DNA]</scope>
    <source>
        <strain>85-10</strain>
    </source>
</reference>
<comment type="function">
    <text evidence="1">This protein is one of the two subunits of integration host factor, a specific DNA-binding protein that functions in genetic recombination as well as in transcriptional and translational control.</text>
</comment>
<comment type="subunit">
    <text evidence="1">Heterodimer of an alpha and a beta chain.</text>
</comment>
<comment type="similarity">
    <text evidence="1">Belongs to the bacterial histone-like protein family.</text>
</comment>
<protein>
    <recommendedName>
        <fullName evidence="1">Integration host factor subunit alpha</fullName>
        <shortName evidence="1">IHF-alpha</shortName>
    </recommendedName>
</protein>
<proteinExistence type="inferred from homology"/>
<gene>
    <name evidence="1" type="primary">ihfA</name>
    <name evidence="1" type="synonym">himA</name>
    <name type="ordered locus">XCV2789</name>
</gene>
<accession>Q3BRU3</accession>
<keyword id="KW-0233">DNA recombination</keyword>
<keyword id="KW-0238">DNA-binding</keyword>
<keyword id="KW-0804">Transcription</keyword>
<keyword id="KW-0805">Transcription regulation</keyword>
<keyword id="KW-0810">Translation regulation</keyword>
<name>IHFA_XANE5</name>
<organism>
    <name type="scientific">Xanthomonas euvesicatoria pv. vesicatoria (strain 85-10)</name>
    <name type="common">Xanthomonas campestris pv. vesicatoria</name>
    <dbReference type="NCBI Taxonomy" id="316273"/>
    <lineage>
        <taxon>Bacteria</taxon>
        <taxon>Pseudomonadati</taxon>
        <taxon>Pseudomonadota</taxon>
        <taxon>Gammaproteobacteria</taxon>
        <taxon>Lysobacterales</taxon>
        <taxon>Lysobacteraceae</taxon>
        <taxon>Xanthomonas</taxon>
    </lineage>
</organism>
<dbReference type="EMBL" id="AM039952">
    <property type="protein sequence ID" value="CAJ24468.1"/>
    <property type="molecule type" value="Genomic_DNA"/>
</dbReference>
<dbReference type="RefSeq" id="WP_002811076.1">
    <property type="nucleotide sequence ID" value="NZ_CP017190.1"/>
</dbReference>
<dbReference type="SMR" id="Q3BRU3"/>
<dbReference type="STRING" id="456327.BJD11_08955"/>
<dbReference type="KEGG" id="xcv:XCV2789"/>
<dbReference type="eggNOG" id="COG0776">
    <property type="taxonomic scope" value="Bacteria"/>
</dbReference>
<dbReference type="HOGENOM" id="CLU_105066_1_3_6"/>
<dbReference type="Proteomes" id="UP000007069">
    <property type="component" value="Chromosome"/>
</dbReference>
<dbReference type="GO" id="GO:0005829">
    <property type="term" value="C:cytosol"/>
    <property type="evidence" value="ECO:0007669"/>
    <property type="project" value="TreeGrafter"/>
</dbReference>
<dbReference type="GO" id="GO:0003677">
    <property type="term" value="F:DNA binding"/>
    <property type="evidence" value="ECO:0007669"/>
    <property type="project" value="UniProtKB-UniRule"/>
</dbReference>
<dbReference type="GO" id="GO:0030527">
    <property type="term" value="F:structural constituent of chromatin"/>
    <property type="evidence" value="ECO:0007669"/>
    <property type="project" value="InterPro"/>
</dbReference>
<dbReference type="GO" id="GO:0006310">
    <property type="term" value="P:DNA recombination"/>
    <property type="evidence" value="ECO:0007669"/>
    <property type="project" value="UniProtKB-UniRule"/>
</dbReference>
<dbReference type="GO" id="GO:0009893">
    <property type="term" value="P:positive regulation of metabolic process"/>
    <property type="evidence" value="ECO:0007669"/>
    <property type="project" value="UniProtKB-ARBA"/>
</dbReference>
<dbReference type="GO" id="GO:0006355">
    <property type="term" value="P:regulation of DNA-templated transcription"/>
    <property type="evidence" value="ECO:0007669"/>
    <property type="project" value="UniProtKB-UniRule"/>
</dbReference>
<dbReference type="GO" id="GO:0006417">
    <property type="term" value="P:regulation of translation"/>
    <property type="evidence" value="ECO:0007669"/>
    <property type="project" value="UniProtKB-UniRule"/>
</dbReference>
<dbReference type="CDD" id="cd13835">
    <property type="entry name" value="IHF_A"/>
    <property type="match status" value="1"/>
</dbReference>
<dbReference type="FunFam" id="4.10.520.10:FF:000002">
    <property type="entry name" value="Integration host factor subunit alpha"/>
    <property type="match status" value="1"/>
</dbReference>
<dbReference type="Gene3D" id="4.10.520.10">
    <property type="entry name" value="IHF-like DNA-binding proteins"/>
    <property type="match status" value="1"/>
</dbReference>
<dbReference type="HAMAP" id="MF_00380">
    <property type="entry name" value="IHF_alpha"/>
    <property type="match status" value="1"/>
</dbReference>
<dbReference type="InterPro" id="IPR000119">
    <property type="entry name" value="Hist_DNA-bd"/>
</dbReference>
<dbReference type="InterPro" id="IPR020816">
    <property type="entry name" value="Histone-like_DNA-bd_CS"/>
</dbReference>
<dbReference type="InterPro" id="IPR010992">
    <property type="entry name" value="IHF-like_DNA-bd_dom_sf"/>
</dbReference>
<dbReference type="InterPro" id="IPR005684">
    <property type="entry name" value="IHF_alpha"/>
</dbReference>
<dbReference type="NCBIfam" id="TIGR00987">
    <property type="entry name" value="himA"/>
    <property type="match status" value="1"/>
</dbReference>
<dbReference type="NCBIfam" id="NF001401">
    <property type="entry name" value="PRK00285.1"/>
    <property type="match status" value="1"/>
</dbReference>
<dbReference type="PANTHER" id="PTHR33175">
    <property type="entry name" value="DNA-BINDING PROTEIN HU"/>
    <property type="match status" value="1"/>
</dbReference>
<dbReference type="PANTHER" id="PTHR33175:SF2">
    <property type="entry name" value="INTEGRATION HOST FACTOR SUBUNIT ALPHA"/>
    <property type="match status" value="1"/>
</dbReference>
<dbReference type="Pfam" id="PF00216">
    <property type="entry name" value="Bac_DNA_binding"/>
    <property type="match status" value="1"/>
</dbReference>
<dbReference type="PRINTS" id="PR01727">
    <property type="entry name" value="DNABINDINGHU"/>
</dbReference>
<dbReference type="SMART" id="SM00411">
    <property type="entry name" value="BHL"/>
    <property type="match status" value="1"/>
</dbReference>
<dbReference type="SUPFAM" id="SSF47729">
    <property type="entry name" value="IHF-like DNA-binding proteins"/>
    <property type="match status" value="1"/>
</dbReference>
<dbReference type="PROSITE" id="PS00045">
    <property type="entry name" value="HISTONE_LIKE"/>
    <property type="match status" value="1"/>
</dbReference>
<evidence type="ECO:0000255" key="1">
    <source>
        <dbReference type="HAMAP-Rule" id="MF_00380"/>
    </source>
</evidence>